<dbReference type="EMBL" id="X84885">
    <property type="protein sequence ID" value="CAA59312.1"/>
    <property type="molecule type" value="Genomic_DNA"/>
</dbReference>
<dbReference type="EMBL" id="U00009">
    <property type="protein sequence ID" value="AAA16415.1"/>
    <property type="molecule type" value="Genomic_DNA"/>
</dbReference>
<dbReference type="EMBL" id="U00096">
    <property type="protein sequence ID" value="AAC75070.1"/>
    <property type="molecule type" value="Genomic_DNA"/>
</dbReference>
<dbReference type="EMBL" id="AP009048">
    <property type="protein sequence ID" value="BAA15830.1"/>
    <property type="molecule type" value="Genomic_DNA"/>
</dbReference>
<dbReference type="PIR" id="H64965">
    <property type="entry name" value="H64965"/>
</dbReference>
<dbReference type="RefSeq" id="NP_416513.1">
    <property type="nucleotide sequence ID" value="NC_000913.3"/>
</dbReference>
<dbReference type="RefSeq" id="WP_001105415.1">
    <property type="nucleotide sequence ID" value="NZ_LN832404.1"/>
</dbReference>
<dbReference type="PDB" id="1JYH">
    <property type="method" value="X-ray"/>
    <property type="resolution" value="1.80 A"/>
    <property type="chains" value="A=1-157"/>
</dbReference>
<dbReference type="PDBsum" id="1JYH"/>
<dbReference type="SMR" id="P33012"/>
<dbReference type="BioGRID" id="4260412">
    <property type="interactions" value="39"/>
</dbReference>
<dbReference type="BioGRID" id="850893">
    <property type="interactions" value="1"/>
</dbReference>
<dbReference type="DIP" id="DIP-9862N"/>
<dbReference type="FunCoup" id="P33012">
    <property type="interactions" value="8"/>
</dbReference>
<dbReference type="IntAct" id="P33012">
    <property type="interactions" value="1"/>
</dbReference>
<dbReference type="MINT" id="P33012"/>
<dbReference type="STRING" id="511145.b2009"/>
<dbReference type="BindingDB" id="P33012"/>
<dbReference type="jPOST" id="P33012"/>
<dbReference type="PaxDb" id="511145-b2009"/>
<dbReference type="EnsemblBacteria" id="AAC75070">
    <property type="protein sequence ID" value="AAC75070"/>
    <property type="gene ID" value="b2009"/>
</dbReference>
<dbReference type="GeneID" id="946546"/>
<dbReference type="KEGG" id="ecj:JW1991"/>
<dbReference type="KEGG" id="eco:b2009"/>
<dbReference type="KEGG" id="ecoc:C3026_11335"/>
<dbReference type="PATRIC" id="fig|1411691.4.peg.243"/>
<dbReference type="EchoBASE" id="EB1838"/>
<dbReference type="eggNOG" id="COG3449">
    <property type="taxonomic scope" value="Bacteria"/>
</dbReference>
<dbReference type="HOGENOM" id="CLU_113664_3_2_6"/>
<dbReference type="InParanoid" id="P33012"/>
<dbReference type="OMA" id="TPWYQFF"/>
<dbReference type="OrthoDB" id="282744at2"/>
<dbReference type="PhylomeDB" id="P33012"/>
<dbReference type="BioCyc" id="EcoCyc:EG11892-MONOMER"/>
<dbReference type="EvolutionaryTrace" id="P33012"/>
<dbReference type="PRO" id="PR:P33012"/>
<dbReference type="Proteomes" id="UP000000625">
    <property type="component" value="Chromosome"/>
</dbReference>
<dbReference type="GO" id="GO:0005737">
    <property type="term" value="C:cytoplasm"/>
    <property type="evidence" value="ECO:0007669"/>
    <property type="project" value="UniProtKB-SubCell"/>
</dbReference>
<dbReference type="GO" id="GO:0008657">
    <property type="term" value="F:DNA topoisomerase type II (double strand cut, ATP-hydrolyzing) inhibitor activity"/>
    <property type="evidence" value="ECO:0000314"/>
    <property type="project" value="CACAO"/>
</dbReference>
<dbReference type="GO" id="GO:0006974">
    <property type="term" value="P:DNA damage response"/>
    <property type="evidence" value="ECO:0000270"/>
    <property type="project" value="EcoliWiki"/>
</dbReference>
<dbReference type="GO" id="GO:2000104">
    <property type="term" value="P:negative regulation of DNA-templated DNA replication"/>
    <property type="evidence" value="ECO:0000314"/>
    <property type="project" value="EcoCyc"/>
</dbReference>
<dbReference type="Gene3D" id="3.20.80.10">
    <property type="entry name" value="Regulatory factor, effector binding domain"/>
    <property type="match status" value="1"/>
</dbReference>
<dbReference type="HAMAP" id="MF_01896">
    <property type="entry name" value="DNA_gyrase_inhibitor"/>
    <property type="match status" value="1"/>
</dbReference>
<dbReference type="InterPro" id="IPR010499">
    <property type="entry name" value="AraC_E-bd"/>
</dbReference>
<dbReference type="InterPro" id="IPR050908">
    <property type="entry name" value="DNA_gyrase_inhibitor"/>
</dbReference>
<dbReference type="InterPro" id="IPR024911">
    <property type="entry name" value="DNA_gyrase_inhibitor_GyrI"/>
</dbReference>
<dbReference type="InterPro" id="IPR029442">
    <property type="entry name" value="GyrI-like"/>
</dbReference>
<dbReference type="InterPro" id="IPR011256">
    <property type="entry name" value="Reg_factor_effector_dom_sf"/>
</dbReference>
<dbReference type="NCBIfam" id="NF007451">
    <property type="entry name" value="PRK10016.1"/>
    <property type="match status" value="1"/>
</dbReference>
<dbReference type="PANTHER" id="PTHR40055:SF2">
    <property type="entry name" value="DNA GYRASE INHIBITOR"/>
    <property type="match status" value="1"/>
</dbReference>
<dbReference type="PANTHER" id="PTHR40055">
    <property type="entry name" value="TRANSCRIPTIONAL REGULATOR YGIV-RELATED"/>
    <property type="match status" value="1"/>
</dbReference>
<dbReference type="Pfam" id="PF06445">
    <property type="entry name" value="GyrI-like"/>
    <property type="match status" value="1"/>
</dbReference>
<dbReference type="SMART" id="SM00871">
    <property type="entry name" value="AraC_E_bind"/>
    <property type="match status" value="1"/>
</dbReference>
<dbReference type="SUPFAM" id="SSF55136">
    <property type="entry name" value="Probable bacterial effector-binding domain"/>
    <property type="match status" value="1"/>
</dbReference>
<organism>
    <name type="scientific">Escherichia coli (strain K12)</name>
    <dbReference type="NCBI Taxonomy" id="83333"/>
    <lineage>
        <taxon>Bacteria</taxon>
        <taxon>Pseudomonadati</taxon>
        <taxon>Pseudomonadota</taxon>
        <taxon>Gammaproteobacteria</taxon>
        <taxon>Enterobacterales</taxon>
        <taxon>Enterobacteriaceae</taxon>
        <taxon>Escherichia</taxon>
    </lineage>
</organism>
<reference key="1">
    <citation type="journal article" date="1995" name="Mol. Microbiol.">
        <title>sbmC, a stationary-phase induced SOS Escherichia coli gene, whose product protects cells from the DNA replication inhibitor microcin B17.</title>
        <authorList>
            <person name="Baquero M.-R."/>
            <person name="Bouzon M."/>
            <person name="Varea J."/>
            <person name="Moreno F."/>
        </authorList>
    </citation>
    <scope>NUCLEOTIDE SEQUENCE [GENOMIC DNA]</scope>
    <scope>FUNCTION</scope>
    <scope>INDUCTION</scope>
    <source>
        <strain>RYC1000</strain>
    </source>
</reference>
<reference key="2">
    <citation type="submission" date="1993-10" db="EMBL/GenBank/DDBJ databases">
        <title>Automated multiplex sequencing of the E.coli genome.</title>
        <authorList>
            <person name="Richterich P."/>
            <person name="Lakey N."/>
            <person name="Gryan G."/>
            <person name="Jaehn L."/>
            <person name="Mintz L."/>
            <person name="Robison K."/>
            <person name="Church G.M."/>
        </authorList>
    </citation>
    <scope>NUCLEOTIDE SEQUENCE [LARGE SCALE GENOMIC DNA]</scope>
    <source>
        <strain>K12 / BHB2600</strain>
    </source>
</reference>
<reference key="3">
    <citation type="journal article" date="1996" name="DNA Res.">
        <title>A 460-kb DNA sequence of the Escherichia coli K-12 genome corresponding to the 40.1-50.0 min region on the linkage map.</title>
        <authorList>
            <person name="Itoh T."/>
            <person name="Aiba H."/>
            <person name="Baba T."/>
            <person name="Fujita K."/>
            <person name="Hayashi K."/>
            <person name="Inada T."/>
            <person name="Isono K."/>
            <person name="Kasai H."/>
            <person name="Kimura S."/>
            <person name="Kitakawa M."/>
            <person name="Kitagawa M."/>
            <person name="Makino K."/>
            <person name="Miki T."/>
            <person name="Mizobuchi K."/>
            <person name="Mori H."/>
            <person name="Mori T."/>
            <person name="Motomura K."/>
            <person name="Nakade S."/>
            <person name="Nakamura Y."/>
            <person name="Nashimoto H."/>
            <person name="Nishio Y."/>
            <person name="Oshima T."/>
            <person name="Saito N."/>
            <person name="Sampei G."/>
            <person name="Seki Y."/>
            <person name="Sivasundaram S."/>
            <person name="Tagami H."/>
            <person name="Takeda J."/>
            <person name="Takemoto K."/>
            <person name="Wada C."/>
            <person name="Yamamoto Y."/>
            <person name="Horiuchi T."/>
        </authorList>
    </citation>
    <scope>NUCLEOTIDE SEQUENCE [LARGE SCALE GENOMIC DNA]</scope>
    <source>
        <strain>K12 / W3110 / ATCC 27325 / DSM 5911</strain>
    </source>
</reference>
<reference key="4">
    <citation type="journal article" date="1997" name="Science">
        <title>The complete genome sequence of Escherichia coli K-12.</title>
        <authorList>
            <person name="Blattner F.R."/>
            <person name="Plunkett G. III"/>
            <person name="Bloch C.A."/>
            <person name="Perna N.T."/>
            <person name="Burland V."/>
            <person name="Riley M."/>
            <person name="Collado-Vides J."/>
            <person name="Glasner J.D."/>
            <person name="Rode C.K."/>
            <person name="Mayhew G.F."/>
            <person name="Gregor J."/>
            <person name="Davis N.W."/>
            <person name="Kirkpatrick H.A."/>
            <person name="Goeden M.A."/>
            <person name="Rose D.J."/>
            <person name="Mau B."/>
            <person name="Shao Y."/>
        </authorList>
    </citation>
    <scope>NUCLEOTIDE SEQUENCE [LARGE SCALE GENOMIC DNA]</scope>
    <source>
        <strain>K12 / MG1655 / ATCC 47076</strain>
    </source>
</reference>
<reference key="5">
    <citation type="journal article" date="2006" name="Mol. Syst. Biol.">
        <title>Highly accurate genome sequences of Escherichia coli K-12 strains MG1655 and W3110.</title>
        <authorList>
            <person name="Hayashi K."/>
            <person name="Morooka N."/>
            <person name="Yamamoto Y."/>
            <person name="Fujita K."/>
            <person name="Isono K."/>
            <person name="Choi S."/>
            <person name="Ohtsubo E."/>
            <person name="Baba T."/>
            <person name="Wanner B.L."/>
            <person name="Mori H."/>
            <person name="Horiuchi T."/>
        </authorList>
    </citation>
    <scope>NUCLEOTIDE SEQUENCE [LARGE SCALE GENOMIC DNA]</scope>
    <source>
        <strain>K12 / W3110 / ATCC 27325 / DSM 5911</strain>
    </source>
</reference>
<reference key="6">
    <citation type="journal article" date="1998" name="J. Biol. Chem.">
        <title>Identification of DNA gyrase inhibitor (GyrI) in Escherichia coli.</title>
        <authorList>
            <person name="Nakanishi A."/>
            <person name="Oshida T."/>
            <person name="Matsushita T."/>
            <person name="Imajoh-Ohmi S."/>
            <person name="Ohnuki T."/>
        </authorList>
    </citation>
    <scope>PROTEIN SEQUENCE OF 1-16</scope>
    <scope>FUNCTION</scope>
    <scope>CHARACTERIZATION</scope>
</reference>
<reference key="7">
    <citation type="journal article" date="2002" name="EMBO Rep.">
        <title>GyrI: a counter-defensive strategy against proteinaceous inhibitors of DNA gyrase.</title>
        <authorList>
            <person name="Chatterji M."/>
            <person name="Nagaraja V."/>
        </authorList>
    </citation>
    <scope>FUNCTION</scope>
</reference>
<reference key="8">
    <citation type="journal article" date="2002" name="J. Biol. Chem.">
        <title>Characterization of the interaction between DNA gyrase inhibitor and DNA gyrase of Escherichia coli.</title>
        <authorList>
            <person name="Nakanishi A."/>
            <person name="Imajoh-Ohmi S."/>
            <person name="Hanaoka F."/>
        </authorList>
    </citation>
    <scope>INTERACTION WITH DNA GYRASE</scope>
</reference>
<reference key="9">
    <citation type="journal article" date="2003" name="Arch. Microbiol.">
        <title>Chromosomally encoded gyrase inhibitor GyrI protects Escherichia coli against DNA-damaging agents.</title>
        <authorList>
            <person name="Chatterji M."/>
            <person name="Sengupta S."/>
            <person name="Nagaraja V."/>
        </authorList>
    </citation>
    <scope>FUNCTION</scope>
</reference>
<reference key="10">
    <citation type="journal article" date="2002" name="Proteins">
        <title>Crystal structure of the Escherichia coli SbmC protein that protects cells from the DNA replication inhibitor microcin B17.</title>
        <authorList>
            <person name="Romanowski M.J."/>
            <person name="Gibney S.A."/>
            <person name="Burley S.K."/>
        </authorList>
    </citation>
    <scope>X-RAY CRYSTALLOGRAPHY (1.8 ANGSTROMS)</scope>
</reference>
<name>SBMC_ECOLI</name>
<evidence type="ECO:0000269" key="1">
    <source>
    </source>
</evidence>
<evidence type="ECO:0000269" key="2">
    <source>
    </source>
</evidence>
<evidence type="ECO:0000269" key="3">
    <source>
    </source>
</evidence>
<evidence type="ECO:0000269" key="4">
    <source>
    </source>
</evidence>
<evidence type="ECO:0000269" key="5">
    <source>
    </source>
</evidence>
<evidence type="ECO:0000305" key="6"/>
<evidence type="ECO:0007829" key="7">
    <source>
        <dbReference type="PDB" id="1JYH"/>
    </source>
</evidence>
<proteinExistence type="evidence at protein level"/>
<protein>
    <recommendedName>
        <fullName>DNA gyrase inhibitor</fullName>
    </recommendedName>
</protein>
<keyword id="KW-0002">3D-structure</keyword>
<keyword id="KW-0963">Cytoplasm</keyword>
<keyword id="KW-0903">Direct protein sequencing</keyword>
<keyword id="KW-1185">Reference proteome</keyword>
<keyword id="KW-0346">Stress response</keyword>
<accession>P33012</accession>
<gene>
    <name type="primary">sbmC</name>
    <name type="synonym">gyrI</name>
    <name type="synonym">yeeB</name>
    <name type="ordered locus">b2009</name>
    <name type="ordered locus">JW1991</name>
</gene>
<feature type="chain" id="PRO_0000083882" description="DNA gyrase inhibitor">
    <location>
        <begin position="1"/>
        <end position="157"/>
    </location>
</feature>
<feature type="region of interest" description="Required for interaction with DNA gyrase and inhibition of its activity">
    <location>
        <begin position="89"/>
        <end position="96"/>
    </location>
</feature>
<feature type="strand" evidence="7">
    <location>
        <begin position="4"/>
        <end position="8"/>
    </location>
</feature>
<feature type="strand" evidence="7">
    <location>
        <begin position="11"/>
        <end position="20"/>
    </location>
</feature>
<feature type="helix" evidence="7">
    <location>
        <begin position="22"/>
        <end position="39"/>
    </location>
</feature>
<feature type="strand" evidence="7">
    <location>
        <begin position="45"/>
        <end position="51"/>
    </location>
</feature>
<feature type="turn" evidence="7">
    <location>
        <begin position="55"/>
        <end position="57"/>
    </location>
</feature>
<feature type="helix" evidence="7">
    <location>
        <begin position="60"/>
        <end position="62"/>
    </location>
</feature>
<feature type="strand" evidence="7">
    <location>
        <begin position="64"/>
        <end position="71"/>
    </location>
</feature>
<feature type="strand" evidence="7">
    <location>
        <begin position="85"/>
        <end position="89"/>
    </location>
</feature>
<feature type="strand" evidence="7">
    <location>
        <begin position="92"/>
        <end position="101"/>
    </location>
</feature>
<feature type="helix" evidence="7">
    <location>
        <begin position="107"/>
        <end position="117"/>
    </location>
</feature>
<feature type="strand" evidence="7">
    <location>
        <begin position="121"/>
        <end position="125"/>
    </location>
</feature>
<feature type="strand" evidence="7">
    <location>
        <begin position="130"/>
        <end position="134"/>
    </location>
</feature>
<feature type="helix" evidence="7">
    <location>
        <begin position="138"/>
        <end position="141"/>
    </location>
</feature>
<feature type="strand" evidence="7">
    <location>
        <begin position="142"/>
        <end position="154"/>
    </location>
</feature>
<comment type="function">
    <text evidence="2 3 4 5">Inhibits the supercoiling activity of DNA gyrase. Acts by inhibiting DNA gyrase at an early step, prior to (or at the step of) binding of DNA by the gyrase. It protects cells against toxins that target DNA gyrase, by inhibiting activity of these toxins and reducing the formation of lethal double-strand breaks in the cell. Protects cells against the natural plasmid-encoded toxins microcin B17 (MccB17) and CcdB, and synthetic quinolones. Can also protect cells against alkylating agents that act independently of DNA gyrase, suggesting a more general role in protecting cells against DNA damage.</text>
</comment>
<comment type="subunit">
    <text evidence="1">Interacts with DNA gyrase. Interacts preferentially with the holoenzyme composed of GyrA and GyrB, but can also weakly interact with the individual GyrA and GyrB subunits.</text>
</comment>
<comment type="subcellular location">
    <subcellularLocation>
        <location>Cytoplasm</location>
    </subcellularLocation>
</comment>
<comment type="induction">
    <text evidence="4">By DNA-damaging agents and by the entry of cells into the stationary growth phase.</text>
</comment>
<comment type="similarity">
    <text evidence="6">Belongs to the DNA gyrase inhibitor family.</text>
</comment>
<sequence>MNYEIKQEEKRTVAGFHLVGPWEQTVKKGFEQLMMWVDSKNIVPKEWVAVYYDNPDETPAEKLRCDTVVTVPGYFTLPENSEGVILTEITGGQYAVAVARVVGDDFAKPWYQFFNSLLQDSAYEMLPKPCFEVYLNNGAEDGYWDIEMYVAVQPKHH</sequence>